<name>OBG_BORHD</name>
<gene>
    <name evidence="1" type="primary">obg</name>
    <name type="ordered locus">BH0781</name>
</gene>
<proteinExistence type="inferred from homology"/>
<dbReference type="EC" id="3.6.5.-" evidence="1"/>
<dbReference type="EMBL" id="CP000048">
    <property type="protein sequence ID" value="AAX17277.1"/>
    <property type="molecule type" value="Genomic_DNA"/>
</dbReference>
<dbReference type="SMR" id="B2S1C3"/>
<dbReference type="KEGG" id="bhr:BH0781"/>
<dbReference type="HOGENOM" id="CLU_011747_2_0_12"/>
<dbReference type="Proteomes" id="UP000008834">
    <property type="component" value="Chromosome"/>
</dbReference>
<dbReference type="GO" id="GO:0005737">
    <property type="term" value="C:cytoplasm"/>
    <property type="evidence" value="ECO:0007669"/>
    <property type="project" value="UniProtKB-SubCell"/>
</dbReference>
<dbReference type="GO" id="GO:0005525">
    <property type="term" value="F:GTP binding"/>
    <property type="evidence" value="ECO:0007669"/>
    <property type="project" value="UniProtKB-UniRule"/>
</dbReference>
<dbReference type="GO" id="GO:0003924">
    <property type="term" value="F:GTPase activity"/>
    <property type="evidence" value="ECO:0007669"/>
    <property type="project" value="UniProtKB-UniRule"/>
</dbReference>
<dbReference type="GO" id="GO:0000287">
    <property type="term" value="F:magnesium ion binding"/>
    <property type="evidence" value="ECO:0007669"/>
    <property type="project" value="InterPro"/>
</dbReference>
<dbReference type="GO" id="GO:0042254">
    <property type="term" value="P:ribosome biogenesis"/>
    <property type="evidence" value="ECO:0007669"/>
    <property type="project" value="UniProtKB-UniRule"/>
</dbReference>
<dbReference type="CDD" id="cd01898">
    <property type="entry name" value="Obg"/>
    <property type="match status" value="1"/>
</dbReference>
<dbReference type="FunFam" id="2.70.210.12:FF:000001">
    <property type="entry name" value="GTPase Obg"/>
    <property type="match status" value="1"/>
</dbReference>
<dbReference type="Gene3D" id="2.70.210.12">
    <property type="entry name" value="GTP1/OBG domain"/>
    <property type="match status" value="1"/>
</dbReference>
<dbReference type="Gene3D" id="3.40.50.300">
    <property type="entry name" value="P-loop containing nucleotide triphosphate hydrolases"/>
    <property type="match status" value="1"/>
</dbReference>
<dbReference type="HAMAP" id="MF_01454">
    <property type="entry name" value="GTPase_Obg"/>
    <property type="match status" value="1"/>
</dbReference>
<dbReference type="InterPro" id="IPR031167">
    <property type="entry name" value="G_OBG"/>
</dbReference>
<dbReference type="InterPro" id="IPR006073">
    <property type="entry name" value="GTP-bd"/>
</dbReference>
<dbReference type="InterPro" id="IPR014100">
    <property type="entry name" value="GTP-bd_Obg/CgtA"/>
</dbReference>
<dbReference type="InterPro" id="IPR006074">
    <property type="entry name" value="GTP1-OBG_CS"/>
</dbReference>
<dbReference type="InterPro" id="IPR006169">
    <property type="entry name" value="GTP1_OBG_dom"/>
</dbReference>
<dbReference type="InterPro" id="IPR036726">
    <property type="entry name" value="GTP1_OBG_dom_sf"/>
</dbReference>
<dbReference type="InterPro" id="IPR045086">
    <property type="entry name" value="OBG_GTPase"/>
</dbReference>
<dbReference type="InterPro" id="IPR027417">
    <property type="entry name" value="P-loop_NTPase"/>
</dbReference>
<dbReference type="NCBIfam" id="TIGR02729">
    <property type="entry name" value="Obg_CgtA"/>
    <property type="match status" value="1"/>
</dbReference>
<dbReference type="NCBIfam" id="NF008956">
    <property type="entry name" value="PRK12299.1"/>
    <property type="match status" value="1"/>
</dbReference>
<dbReference type="PANTHER" id="PTHR11702">
    <property type="entry name" value="DEVELOPMENTALLY REGULATED GTP-BINDING PROTEIN-RELATED"/>
    <property type="match status" value="1"/>
</dbReference>
<dbReference type="PANTHER" id="PTHR11702:SF31">
    <property type="entry name" value="MITOCHONDRIAL RIBOSOME-ASSOCIATED GTPASE 2"/>
    <property type="match status" value="1"/>
</dbReference>
<dbReference type="Pfam" id="PF01018">
    <property type="entry name" value="GTP1_OBG"/>
    <property type="match status" value="1"/>
</dbReference>
<dbReference type="Pfam" id="PF01926">
    <property type="entry name" value="MMR_HSR1"/>
    <property type="match status" value="1"/>
</dbReference>
<dbReference type="PIRSF" id="PIRSF002401">
    <property type="entry name" value="GTP_bd_Obg/CgtA"/>
    <property type="match status" value="1"/>
</dbReference>
<dbReference type="PRINTS" id="PR00326">
    <property type="entry name" value="GTP1OBG"/>
</dbReference>
<dbReference type="SUPFAM" id="SSF82051">
    <property type="entry name" value="Obg GTP-binding protein N-terminal domain"/>
    <property type="match status" value="1"/>
</dbReference>
<dbReference type="SUPFAM" id="SSF52540">
    <property type="entry name" value="P-loop containing nucleoside triphosphate hydrolases"/>
    <property type="match status" value="1"/>
</dbReference>
<dbReference type="PROSITE" id="PS51710">
    <property type="entry name" value="G_OBG"/>
    <property type="match status" value="1"/>
</dbReference>
<dbReference type="PROSITE" id="PS00905">
    <property type="entry name" value="GTP1_OBG"/>
    <property type="match status" value="1"/>
</dbReference>
<dbReference type="PROSITE" id="PS51883">
    <property type="entry name" value="OBG"/>
    <property type="match status" value="1"/>
</dbReference>
<sequence>MHILKDSLSITVSSGDGGAGCVSFLRERFNTKGGPDGGDGGRGGDVIFKVKANLKSLSLYKNGQRLAANNGKPGMGSRKSGASGEDLVIFVPPNTCIYDVATGSMLFELQNFDDEVIALKGGRGGLGNVHFKSSTKRTPRFAQPGESGATLNLRLELSLIADIGLVGFPNAGKSSLISTITASKSRVANYPFTTRFPHLGVLKASYNDLVIADVPGLIEGASQGIGLGFEFLRHISKTKILVFLIDVASDNFMSAYDILVNELSAYDIGLSSKKRIIVANKLDLEGAIENFNQLKRALVGERVLGISIYDNTGINELVSELFALSRI</sequence>
<protein>
    <recommendedName>
        <fullName evidence="1">GTPase Obg</fullName>
        <ecNumber evidence="1">3.6.5.-</ecNumber>
    </recommendedName>
    <alternativeName>
        <fullName evidence="1">GTP-binding protein Obg</fullName>
    </alternativeName>
</protein>
<organism>
    <name type="scientific">Borrelia hermsii (strain HS1 / DAH)</name>
    <dbReference type="NCBI Taxonomy" id="314723"/>
    <lineage>
        <taxon>Bacteria</taxon>
        <taxon>Pseudomonadati</taxon>
        <taxon>Spirochaetota</taxon>
        <taxon>Spirochaetia</taxon>
        <taxon>Spirochaetales</taxon>
        <taxon>Borreliaceae</taxon>
        <taxon>Borrelia</taxon>
    </lineage>
</organism>
<evidence type="ECO:0000255" key="1">
    <source>
        <dbReference type="HAMAP-Rule" id="MF_01454"/>
    </source>
</evidence>
<evidence type="ECO:0000255" key="2">
    <source>
        <dbReference type="PROSITE-ProRule" id="PRU01231"/>
    </source>
</evidence>
<reference key="1">
    <citation type="submission" date="2004-12" db="EMBL/GenBank/DDBJ databases">
        <title>The genome sequence of Borrelia hermsii and Borrelia turicatae: comparative analysis of two agents of endemic N. America relapsing fever.</title>
        <authorList>
            <person name="Porcella S.F."/>
            <person name="Raffel S.J."/>
            <person name="Schrumpf M.E."/>
            <person name="Montgomery B."/>
            <person name="Smith T."/>
            <person name="Schwan T.G."/>
        </authorList>
    </citation>
    <scope>NUCLEOTIDE SEQUENCE [LARGE SCALE GENOMIC DNA]</scope>
    <source>
        <strain>HS1 / DAH</strain>
    </source>
</reference>
<keyword id="KW-0963">Cytoplasm</keyword>
<keyword id="KW-0342">GTP-binding</keyword>
<keyword id="KW-0378">Hydrolase</keyword>
<keyword id="KW-0460">Magnesium</keyword>
<keyword id="KW-0479">Metal-binding</keyword>
<keyword id="KW-0547">Nucleotide-binding</keyword>
<accession>B2S1C3</accession>
<comment type="function">
    <text evidence="1">An essential GTPase which binds GTP, GDP and possibly (p)ppGpp with moderate affinity, with high nucleotide exchange rates and a fairly low GTP hydrolysis rate. Plays a role in control of the cell cycle, stress response, ribosome biogenesis and in those bacteria that undergo differentiation, in morphogenesis control.</text>
</comment>
<comment type="cofactor">
    <cofactor evidence="1">
        <name>Mg(2+)</name>
        <dbReference type="ChEBI" id="CHEBI:18420"/>
    </cofactor>
</comment>
<comment type="subunit">
    <text evidence="1">Monomer.</text>
</comment>
<comment type="subcellular location">
    <subcellularLocation>
        <location evidence="1">Cytoplasm</location>
    </subcellularLocation>
</comment>
<comment type="similarity">
    <text evidence="1">Belongs to the TRAFAC class OBG-HflX-like GTPase superfamily. OBG GTPase family.</text>
</comment>
<feature type="chain" id="PRO_0000385758" description="GTPase Obg">
    <location>
        <begin position="1"/>
        <end position="327"/>
    </location>
</feature>
<feature type="domain" description="Obg" evidence="2">
    <location>
        <begin position="2"/>
        <end position="160"/>
    </location>
</feature>
<feature type="domain" description="OBG-type G" evidence="1">
    <location>
        <begin position="161"/>
        <end position="326"/>
    </location>
</feature>
<feature type="binding site" evidence="1">
    <location>
        <begin position="167"/>
        <end position="174"/>
    </location>
    <ligand>
        <name>GTP</name>
        <dbReference type="ChEBI" id="CHEBI:37565"/>
    </ligand>
</feature>
<feature type="binding site" evidence="1">
    <location>
        <position position="174"/>
    </location>
    <ligand>
        <name>Mg(2+)</name>
        <dbReference type="ChEBI" id="CHEBI:18420"/>
    </ligand>
</feature>
<feature type="binding site" evidence="1">
    <location>
        <begin position="192"/>
        <end position="196"/>
    </location>
    <ligand>
        <name>GTP</name>
        <dbReference type="ChEBI" id="CHEBI:37565"/>
    </ligand>
</feature>
<feature type="binding site" evidence="1">
    <location>
        <position position="194"/>
    </location>
    <ligand>
        <name>Mg(2+)</name>
        <dbReference type="ChEBI" id="CHEBI:18420"/>
    </ligand>
</feature>
<feature type="binding site" evidence="1">
    <location>
        <begin position="213"/>
        <end position="216"/>
    </location>
    <ligand>
        <name>GTP</name>
        <dbReference type="ChEBI" id="CHEBI:37565"/>
    </ligand>
</feature>
<feature type="binding site" evidence="1">
    <location>
        <begin position="280"/>
        <end position="283"/>
    </location>
    <ligand>
        <name>GTP</name>
        <dbReference type="ChEBI" id="CHEBI:37565"/>
    </ligand>
</feature>
<feature type="binding site" evidence="1">
    <location>
        <begin position="307"/>
        <end position="309"/>
    </location>
    <ligand>
        <name>GTP</name>
        <dbReference type="ChEBI" id="CHEBI:37565"/>
    </ligand>
</feature>